<keyword id="KW-0378">Hydrolase</keyword>
<sequence>MIDFDGYRPNVGIVICNRKGQVLWAKRYGQNSWQYPQGGINDGETPEQAMYRELYEEVGLTRRDVRIVYASKQWLRYKLPKRLLRYDSKPMCIGQKQRWFLVQLMSDEKNINMNCSKSPEFDGWRWVSFWYPVRQVVSFKRDVYRKAMKEFACFLFDANKTVNPLSTNNNDEKKANYSAKKPYSPYRNQDKKRKTRV</sequence>
<protein>
    <recommendedName>
        <fullName evidence="1">RNA pyrophosphohydrolase</fullName>
        <ecNumber evidence="1">3.6.1.-</ecNumber>
    </recommendedName>
    <alternativeName>
        <fullName evidence="1">(Di)nucleoside polyphosphate hydrolase</fullName>
    </alternativeName>
</protein>
<dbReference type="EC" id="3.6.1.-" evidence="1"/>
<dbReference type="EMBL" id="AE016827">
    <property type="protein sequence ID" value="AAU37015.1"/>
    <property type="molecule type" value="Genomic_DNA"/>
</dbReference>
<dbReference type="RefSeq" id="WP_011199590.1">
    <property type="nucleotide sequence ID" value="NC_006300.1"/>
</dbReference>
<dbReference type="SMR" id="Q65VJ5"/>
<dbReference type="STRING" id="221988.MS0408"/>
<dbReference type="KEGG" id="msu:MS0408"/>
<dbReference type="eggNOG" id="COG0494">
    <property type="taxonomic scope" value="Bacteria"/>
</dbReference>
<dbReference type="HOGENOM" id="CLU_087195_3_2_6"/>
<dbReference type="OrthoDB" id="9816040at2"/>
<dbReference type="Proteomes" id="UP000000607">
    <property type="component" value="Chromosome"/>
</dbReference>
<dbReference type="GO" id="GO:0005737">
    <property type="term" value="C:cytoplasm"/>
    <property type="evidence" value="ECO:0007669"/>
    <property type="project" value="TreeGrafter"/>
</dbReference>
<dbReference type="GO" id="GO:0034353">
    <property type="term" value="F:mRNA 5'-diphosphatase activity"/>
    <property type="evidence" value="ECO:0007669"/>
    <property type="project" value="TreeGrafter"/>
</dbReference>
<dbReference type="GO" id="GO:0006402">
    <property type="term" value="P:mRNA catabolic process"/>
    <property type="evidence" value="ECO:0007669"/>
    <property type="project" value="TreeGrafter"/>
</dbReference>
<dbReference type="CDD" id="cd03671">
    <property type="entry name" value="NUDIX_Ap4A_hydrolase_plant_like"/>
    <property type="match status" value="1"/>
</dbReference>
<dbReference type="FunFam" id="3.90.79.10:FF:000001">
    <property type="entry name" value="RNA pyrophosphohydrolase"/>
    <property type="match status" value="1"/>
</dbReference>
<dbReference type="Gene3D" id="3.90.79.10">
    <property type="entry name" value="Nucleoside Triphosphate Pyrophosphohydrolase"/>
    <property type="match status" value="1"/>
</dbReference>
<dbReference type="HAMAP" id="MF_00298">
    <property type="entry name" value="Nudix_RppH"/>
    <property type="match status" value="1"/>
</dbReference>
<dbReference type="InterPro" id="IPR020476">
    <property type="entry name" value="Nudix_hydrolase"/>
</dbReference>
<dbReference type="InterPro" id="IPR015797">
    <property type="entry name" value="NUDIX_hydrolase-like_dom_sf"/>
</dbReference>
<dbReference type="InterPro" id="IPR020084">
    <property type="entry name" value="NUDIX_hydrolase_CS"/>
</dbReference>
<dbReference type="InterPro" id="IPR000086">
    <property type="entry name" value="NUDIX_hydrolase_dom"/>
</dbReference>
<dbReference type="InterPro" id="IPR022927">
    <property type="entry name" value="RppH"/>
</dbReference>
<dbReference type="NCBIfam" id="NF001934">
    <property type="entry name" value="PRK00714.1-1"/>
    <property type="match status" value="1"/>
</dbReference>
<dbReference type="NCBIfam" id="NF001937">
    <property type="entry name" value="PRK00714.1-4"/>
    <property type="match status" value="1"/>
</dbReference>
<dbReference type="NCBIfam" id="NF001938">
    <property type="entry name" value="PRK00714.1-5"/>
    <property type="match status" value="1"/>
</dbReference>
<dbReference type="PANTHER" id="PTHR23114">
    <property type="entry name" value="M7GPPPN-MRNA HYDROLASE"/>
    <property type="match status" value="1"/>
</dbReference>
<dbReference type="PANTHER" id="PTHR23114:SF17">
    <property type="entry name" value="M7GPPPN-MRNA HYDROLASE"/>
    <property type="match status" value="1"/>
</dbReference>
<dbReference type="Pfam" id="PF00293">
    <property type="entry name" value="NUDIX"/>
    <property type="match status" value="1"/>
</dbReference>
<dbReference type="PRINTS" id="PR00502">
    <property type="entry name" value="NUDIXFAMILY"/>
</dbReference>
<dbReference type="SUPFAM" id="SSF55811">
    <property type="entry name" value="Nudix"/>
    <property type="match status" value="1"/>
</dbReference>
<dbReference type="PROSITE" id="PS51462">
    <property type="entry name" value="NUDIX"/>
    <property type="match status" value="1"/>
</dbReference>
<dbReference type="PROSITE" id="PS00893">
    <property type="entry name" value="NUDIX_BOX"/>
    <property type="match status" value="1"/>
</dbReference>
<feature type="chain" id="PRO_0000231915" description="RNA pyrophosphohydrolase">
    <location>
        <begin position="1"/>
        <end position="197"/>
    </location>
</feature>
<feature type="domain" description="Nudix hydrolase" evidence="1">
    <location>
        <begin position="6"/>
        <end position="149"/>
    </location>
</feature>
<feature type="region of interest" description="Disordered" evidence="2">
    <location>
        <begin position="165"/>
        <end position="197"/>
    </location>
</feature>
<feature type="short sequence motif" description="Nudix box">
    <location>
        <begin position="38"/>
        <end position="59"/>
    </location>
</feature>
<accession>Q65VJ5</accession>
<gene>
    <name evidence="1" type="primary">rppH</name>
    <name evidence="1" type="synonym">nudH</name>
    <name type="ordered locus">MS0408</name>
</gene>
<reference key="1">
    <citation type="journal article" date="2004" name="Nat. Biotechnol.">
        <title>The genome sequence of the capnophilic rumen bacterium Mannheimia succiniciproducens.</title>
        <authorList>
            <person name="Hong S.H."/>
            <person name="Kim J.S."/>
            <person name="Lee S.Y."/>
            <person name="In Y.H."/>
            <person name="Choi S.S."/>
            <person name="Rih J.-K."/>
            <person name="Kim C.H."/>
            <person name="Jeong H."/>
            <person name="Hur C.G."/>
            <person name="Kim J.J."/>
        </authorList>
    </citation>
    <scope>NUCLEOTIDE SEQUENCE [LARGE SCALE GENOMIC DNA]</scope>
    <source>
        <strain>KCTC 0769BP / MBEL55E</strain>
    </source>
</reference>
<organism>
    <name type="scientific">Mannheimia succiniciproducens (strain KCTC 0769BP / MBEL55E)</name>
    <dbReference type="NCBI Taxonomy" id="221988"/>
    <lineage>
        <taxon>Bacteria</taxon>
        <taxon>Pseudomonadati</taxon>
        <taxon>Pseudomonadota</taxon>
        <taxon>Gammaproteobacteria</taxon>
        <taxon>Pasteurellales</taxon>
        <taxon>Pasteurellaceae</taxon>
        <taxon>Basfia</taxon>
    </lineage>
</organism>
<comment type="function">
    <text evidence="1">Accelerates the degradation of transcripts by removing pyrophosphate from the 5'-end of triphosphorylated RNA, leading to a more labile monophosphorylated state that can stimulate subsequent ribonuclease cleavage.</text>
</comment>
<comment type="cofactor">
    <cofactor evidence="1">
        <name>a divalent metal cation</name>
        <dbReference type="ChEBI" id="CHEBI:60240"/>
    </cofactor>
</comment>
<comment type="similarity">
    <text evidence="1">Belongs to the Nudix hydrolase family. RppH subfamily.</text>
</comment>
<evidence type="ECO:0000255" key="1">
    <source>
        <dbReference type="HAMAP-Rule" id="MF_00298"/>
    </source>
</evidence>
<evidence type="ECO:0000256" key="2">
    <source>
        <dbReference type="SAM" id="MobiDB-lite"/>
    </source>
</evidence>
<name>RPPH_MANSM</name>
<proteinExistence type="inferred from homology"/>